<feature type="chain" id="PRO_0000223224" description="Auxin-responsive protein IAA25">
    <location>
        <begin position="1"/>
        <end position="246"/>
    </location>
</feature>
<feature type="domain" description="PB1" evidence="2">
    <location>
        <begin position="143"/>
        <end position="238"/>
    </location>
</feature>
<feature type="region of interest" description="Disordered" evidence="3">
    <location>
        <begin position="1"/>
        <end position="22"/>
    </location>
</feature>
<feature type="short sequence motif" description="EAR-like (transcriptional repression)" evidence="1">
    <location>
        <begin position="28"/>
        <end position="32"/>
    </location>
</feature>
<feature type="compositionally biased region" description="Basic and acidic residues" evidence="3">
    <location>
        <begin position="10"/>
        <end position="22"/>
    </location>
</feature>
<evidence type="ECO:0000250" key="1"/>
<evidence type="ECO:0000255" key="2">
    <source>
        <dbReference type="PROSITE-ProRule" id="PRU01081"/>
    </source>
</evidence>
<evidence type="ECO:0000256" key="3">
    <source>
        <dbReference type="SAM" id="MobiDB-lite"/>
    </source>
</evidence>
<evidence type="ECO:0000269" key="4">
    <source>
    </source>
</evidence>
<evidence type="ECO:0000305" key="5"/>
<evidence type="ECO:0000312" key="6">
    <source>
        <dbReference type="EMBL" id="EAZ36954.1"/>
    </source>
</evidence>
<sequence length="246" mass="27324">MKSSSVAPRLKQERQDDCKFQEGDVNSLELRLGISSDNDQISGGGAASPWLGVGVHPWSLAARQGKAALEQAHQRPNECAVQRENRAASSAQLVGWPPVRAFRKNLSTPKPADADDLMNKVKLCSDEGHGSRCAAQERRSSSTMFVKVNLEGYAVGRKIDLKAHRSYDSLSQALQSMFHGFLSDGIATRDNELQQMEEGSKKRYVLVYEDNEGDRMLVGDVPWELFIASVKRLYIAQDPRVHAKLR</sequence>
<keyword id="KW-0927">Auxin signaling pathway</keyword>
<keyword id="KW-0539">Nucleus</keyword>
<keyword id="KW-1185">Reference proteome</keyword>
<keyword id="KW-0678">Repressor</keyword>
<keyword id="KW-0804">Transcription</keyword>
<keyword id="KW-0805">Transcription regulation</keyword>
<comment type="function">
    <text evidence="1">Aux/IAA proteins are short-lived transcriptional factors that function as repressors of early auxin response genes at low auxin concentrations.</text>
</comment>
<comment type="subunit">
    <text evidence="1">Homodimers and heterodimers.</text>
</comment>
<comment type="subcellular location">
    <subcellularLocation>
        <location evidence="1">Nucleus</location>
    </subcellularLocation>
</comment>
<comment type="tissue specificity">
    <text evidence="4">Highly expressed in flowers. Expressed in roots and seedlings.</text>
</comment>
<comment type="induction">
    <text evidence="4">Not induced by auxin.</text>
</comment>
<comment type="similarity">
    <text evidence="5">Belongs to the Aux/IAA family.</text>
</comment>
<reference key="1">
    <citation type="journal article" date="2005" name="Nature">
        <title>The map-based sequence of the rice genome.</title>
        <authorList>
            <consortium name="International rice genome sequencing project (IRGSP)"/>
        </authorList>
    </citation>
    <scope>NUCLEOTIDE SEQUENCE [LARGE SCALE GENOMIC DNA]</scope>
    <source>
        <strain>cv. Nipponbare</strain>
    </source>
</reference>
<reference key="2">
    <citation type="journal article" date="2008" name="Nucleic Acids Res.">
        <title>The rice annotation project database (RAP-DB): 2008 update.</title>
        <authorList>
            <consortium name="The rice annotation project (RAP)"/>
        </authorList>
    </citation>
    <scope>GENOME REANNOTATION</scope>
    <source>
        <strain>cv. Nipponbare</strain>
    </source>
</reference>
<reference key="3">
    <citation type="journal article" date="2013" name="Rice">
        <title>Improvement of the Oryza sativa Nipponbare reference genome using next generation sequence and optical map data.</title>
        <authorList>
            <person name="Kawahara Y."/>
            <person name="de la Bastide M."/>
            <person name="Hamilton J.P."/>
            <person name="Kanamori H."/>
            <person name="McCombie W.R."/>
            <person name="Ouyang S."/>
            <person name="Schwartz D.C."/>
            <person name="Tanaka T."/>
            <person name="Wu J."/>
            <person name="Zhou S."/>
            <person name="Childs K.L."/>
            <person name="Davidson R.M."/>
            <person name="Lin H."/>
            <person name="Quesada-Ocampo L."/>
            <person name="Vaillancourt B."/>
            <person name="Sakai H."/>
            <person name="Lee S.S."/>
            <person name="Kim J."/>
            <person name="Numa H."/>
            <person name="Itoh T."/>
            <person name="Buell C.R."/>
            <person name="Matsumoto T."/>
        </authorList>
    </citation>
    <scope>GENOME REANNOTATION</scope>
    <source>
        <strain>cv. Nipponbare</strain>
    </source>
</reference>
<reference key="4">
    <citation type="journal article" date="2005" name="PLoS Biol.">
        <title>The genomes of Oryza sativa: a history of duplications.</title>
        <authorList>
            <person name="Yu J."/>
            <person name="Wang J."/>
            <person name="Lin W."/>
            <person name="Li S."/>
            <person name="Li H."/>
            <person name="Zhou J."/>
            <person name="Ni P."/>
            <person name="Dong W."/>
            <person name="Hu S."/>
            <person name="Zeng C."/>
            <person name="Zhang J."/>
            <person name="Zhang Y."/>
            <person name="Li R."/>
            <person name="Xu Z."/>
            <person name="Li S."/>
            <person name="Li X."/>
            <person name="Zheng H."/>
            <person name="Cong L."/>
            <person name="Lin L."/>
            <person name="Yin J."/>
            <person name="Geng J."/>
            <person name="Li G."/>
            <person name="Shi J."/>
            <person name="Liu J."/>
            <person name="Lv H."/>
            <person name="Li J."/>
            <person name="Wang J."/>
            <person name="Deng Y."/>
            <person name="Ran L."/>
            <person name="Shi X."/>
            <person name="Wang X."/>
            <person name="Wu Q."/>
            <person name="Li C."/>
            <person name="Ren X."/>
            <person name="Wang J."/>
            <person name="Wang X."/>
            <person name="Li D."/>
            <person name="Liu D."/>
            <person name="Zhang X."/>
            <person name="Ji Z."/>
            <person name="Zhao W."/>
            <person name="Sun Y."/>
            <person name="Zhang Z."/>
            <person name="Bao J."/>
            <person name="Han Y."/>
            <person name="Dong L."/>
            <person name="Ji J."/>
            <person name="Chen P."/>
            <person name="Wu S."/>
            <person name="Liu J."/>
            <person name="Xiao Y."/>
            <person name="Bu D."/>
            <person name="Tan J."/>
            <person name="Yang L."/>
            <person name="Ye C."/>
            <person name="Zhang J."/>
            <person name="Xu J."/>
            <person name="Zhou Y."/>
            <person name="Yu Y."/>
            <person name="Zhang B."/>
            <person name="Zhuang S."/>
            <person name="Wei H."/>
            <person name="Liu B."/>
            <person name="Lei M."/>
            <person name="Yu H."/>
            <person name="Li Y."/>
            <person name="Xu H."/>
            <person name="Wei S."/>
            <person name="He X."/>
            <person name="Fang L."/>
            <person name="Zhang Z."/>
            <person name="Zhang Y."/>
            <person name="Huang X."/>
            <person name="Su Z."/>
            <person name="Tong W."/>
            <person name="Li J."/>
            <person name="Tong Z."/>
            <person name="Li S."/>
            <person name="Ye J."/>
            <person name="Wang L."/>
            <person name="Fang L."/>
            <person name="Lei T."/>
            <person name="Chen C.-S."/>
            <person name="Chen H.-C."/>
            <person name="Xu Z."/>
            <person name="Li H."/>
            <person name="Huang H."/>
            <person name="Zhang F."/>
            <person name="Xu H."/>
            <person name="Li N."/>
            <person name="Zhao C."/>
            <person name="Li S."/>
            <person name="Dong L."/>
            <person name="Huang Y."/>
            <person name="Li L."/>
            <person name="Xi Y."/>
            <person name="Qi Q."/>
            <person name="Li W."/>
            <person name="Zhang B."/>
            <person name="Hu W."/>
            <person name="Zhang Y."/>
            <person name="Tian X."/>
            <person name="Jiao Y."/>
            <person name="Liang X."/>
            <person name="Jin J."/>
            <person name="Gao L."/>
            <person name="Zheng W."/>
            <person name="Hao B."/>
            <person name="Liu S.-M."/>
            <person name="Wang W."/>
            <person name="Yuan L."/>
            <person name="Cao M."/>
            <person name="McDermott J."/>
            <person name="Samudrala R."/>
            <person name="Wang J."/>
            <person name="Wong G.K.-S."/>
            <person name="Yang H."/>
        </authorList>
    </citation>
    <scope>NUCLEOTIDE SEQUENCE [LARGE SCALE GENOMIC DNA]</scope>
    <source>
        <strain>cv. Nipponbare</strain>
    </source>
</reference>
<reference key="5">
    <citation type="journal article" date="2003" name="Science">
        <title>Collection, mapping, and annotation of over 28,000 cDNA clones from japonica rice.</title>
        <authorList>
            <consortium name="The rice full-length cDNA consortium"/>
        </authorList>
    </citation>
    <scope>NUCLEOTIDE SEQUENCE [LARGE SCALE MRNA]</scope>
    <source>
        <strain>cv. Nipponbare</strain>
    </source>
</reference>
<reference key="6">
    <citation type="journal article" date="2006" name="Funct. Integr. Genomics">
        <title>Structure and expression analysis of early auxin-responsive Aux/IAA gene family in rice (Oryza sativa).</title>
        <authorList>
            <person name="Jain M."/>
            <person name="Kaur N."/>
            <person name="Garg R."/>
            <person name="Thakur J.K."/>
            <person name="Tyagi A.K."/>
            <person name="Khurana J.P."/>
        </authorList>
    </citation>
    <scope>TISSUE SPECIFICITY</scope>
    <scope>INDUCTION</scope>
    <scope>NOMENCLATURE</scope>
</reference>
<accession>P0C128</accession>
<accession>Q0J8J0</accession>
<name>IAA25_ORYSJ</name>
<organism>
    <name type="scientific">Oryza sativa subsp. japonica</name>
    <name type="common">Rice</name>
    <dbReference type="NCBI Taxonomy" id="39947"/>
    <lineage>
        <taxon>Eukaryota</taxon>
        <taxon>Viridiplantae</taxon>
        <taxon>Streptophyta</taxon>
        <taxon>Embryophyta</taxon>
        <taxon>Tracheophyta</taxon>
        <taxon>Spermatophyta</taxon>
        <taxon>Magnoliopsida</taxon>
        <taxon>Liliopsida</taxon>
        <taxon>Poales</taxon>
        <taxon>Poaceae</taxon>
        <taxon>BOP clade</taxon>
        <taxon>Oryzoideae</taxon>
        <taxon>Oryzeae</taxon>
        <taxon>Oryzinae</taxon>
        <taxon>Oryza</taxon>
        <taxon>Oryza sativa</taxon>
    </lineage>
</organism>
<protein>
    <recommendedName>
        <fullName>Auxin-responsive protein IAA25</fullName>
    </recommendedName>
    <alternativeName>
        <fullName>Indoleacetic acid-induced protein 25</fullName>
    </alternativeName>
</protein>
<gene>
    <name type="primary">IAA25</name>
    <name type="ordered locus">Os08g0109400</name>
    <name type="ordered locus">LOC_Os08g01780</name>
    <name evidence="6" type="ORF">OsJ_21291</name>
</gene>
<dbReference type="EMBL" id="AP004584">
    <property type="status" value="NOT_ANNOTATED_CDS"/>
    <property type="molecule type" value="Genomic_DNA"/>
</dbReference>
<dbReference type="EMBL" id="AP008214">
    <property type="protein sequence ID" value="BAF22725.1"/>
    <property type="molecule type" value="Genomic_DNA"/>
</dbReference>
<dbReference type="EMBL" id="AP014964">
    <property type="protein sequence ID" value="BAT03487.1"/>
    <property type="molecule type" value="Genomic_DNA"/>
</dbReference>
<dbReference type="EMBL" id="CM000143">
    <property type="protein sequence ID" value="EAZ36954.1"/>
    <property type="molecule type" value="Genomic_DNA"/>
</dbReference>
<dbReference type="EMBL" id="AK068232">
    <property type="protein sequence ID" value="BAG90814.1"/>
    <property type="molecule type" value="mRNA"/>
</dbReference>
<dbReference type="RefSeq" id="XP_015648256.1">
    <property type="nucleotide sequence ID" value="XM_015792770.1"/>
</dbReference>
<dbReference type="RefSeq" id="XP_015648257.1">
    <property type="nucleotide sequence ID" value="XM_015792771.1"/>
</dbReference>
<dbReference type="RefSeq" id="XP_015648258.1">
    <property type="nucleotide sequence ID" value="XM_015792772.1"/>
</dbReference>
<dbReference type="RefSeq" id="XP_015648260.1">
    <property type="nucleotide sequence ID" value="XM_015792774.1"/>
</dbReference>
<dbReference type="RefSeq" id="XP_015648261.1">
    <property type="nucleotide sequence ID" value="XM_015792775.1"/>
</dbReference>
<dbReference type="SMR" id="P0C128"/>
<dbReference type="FunCoup" id="P0C128">
    <property type="interactions" value="177"/>
</dbReference>
<dbReference type="STRING" id="39947.P0C128"/>
<dbReference type="PaxDb" id="39947-P0C128"/>
<dbReference type="EnsemblPlants" id="Os08t0109400-01">
    <property type="protein sequence ID" value="Os08t0109400-01"/>
    <property type="gene ID" value="Os08g0109400"/>
</dbReference>
<dbReference type="GeneID" id="4344471"/>
<dbReference type="Gramene" id="Os08t0109400-01">
    <property type="protein sequence ID" value="Os08t0109400-01"/>
    <property type="gene ID" value="Os08g0109400"/>
</dbReference>
<dbReference type="KEGG" id="dosa:Os08g0109400"/>
<dbReference type="KEGG" id="osa:4344471"/>
<dbReference type="eggNOG" id="ENOG502S0RH">
    <property type="taxonomic scope" value="Eukaryota"/>
</dbReference>
<dbReference type="HOGENOM" id="CLU_072437_0_0_1"/>
<dbReference type="InParanoid" id="P0C128"/>
<dbReference type="OMA" id="GHERPAM"/>
<dbReference type="OrthoDB" id="615826at2759"/>
<dbReference type="PlantReactome" id="R-OSA-5608118">
    <property type="pathway name" value="Auxin signalling"/>
</dbReference>
<dbReference type="Proteomes" id="UP000000763">
    <property type="component" value="Chromosome 8"/>
</dbReference>
<dbReference type="Proteomes" id="UP000007752">
    <property type="component" value="Chromosome 6"/>
</dbReference>
<dbReference type="Proteomes" id="UP000059680">
    <property type="component" value="Chromosome 8"/>
</dbReference>
<dbReference type="GO" id="GO:0005634">
    <property type="term" value="C:nucleus"/>
    <property type="evidence" value="ECO:0007669"/>
    <property type="project" value="UniProtKB-SubCell"/>
</dbReference>
<dbReference type="GO" id="GO:0009734">
    <property type="term" value="P:auxin-activated signaling pathway"/>
    <property type="evidence" value="ECO:0007669"/>
    <property type="project" value="UniProtKB-KW"/>
</dbReference>
<dbReference type="GO" id="GO:0006355">
    <property type="term" value="P:regulation of DNA-templated transcription"/>
    <property type="evidence" value="ECO:0007669"/>
    <property type="project" value="InterPro"/>
</dbReference>
<dbReference type="Gene3D" id="3.10.20.90">
    <property type="entry name" value="Phosphatidylinositol 3-kinase Catalytic Subunit, Chain A, domain 1"/>
    <property type="match status" value="1"/>
</dbReference>
<dbReference type="InterPro" id="IPR033389">
    <property type="entry name" value="AUX/IAA_dom"/>
</dbReference>
<dbReference type="InterPro" id="IPR003311">
    <property type="entry name" value="AUX_IAA"/>
</dbReference>
<dbReference type="InterPro" id="IPR053793">
    <property type="entry name" value="PB1-like"/>
</dbReference>
<dbReference type="PANTHER" id="PTHR31734">
    <property type="entry name" value="AUXIN-RESPONSIVE PROTEIN IAA17"/>
    <property type="match status" value="1"/>
</dbReference>
<dbReference type="PANTHER" id="PTHR31734:SF120">
    <property type="entry name" value="AUXIN-RESPONSIVE PROTEIN IAA25"/>
    <property type="match status" value="1"/>
</dbReference>
<dbReference type="Pfam" id="PF02309">
    <property type="entry name" value="AUX_IAA"/>
    <property type="match status" value="1"/>
</dbReference>
<dbReference type="SUPFAM" id="SSF54277">
    <property type="entry name" value="CAD &amp; PB1 domains"/>
    <property type="match status" value="1"/>
</dbReference>
<dbReference type="PROSITE" id="PS51745">
    <property type="entry name" value="PB1"/>
    <property type="match status" value="1"/>
</dbReference>
<proteinExistence type="evidence at transcript level"/>